<name>SELA_NAUPA</name>
<organism>
    <name type="scientific">Nautilia profundicola (strain ATCC BAA-1463 / DSM 18972 / AmH)</name>
    <dbReference type="NCBI Taxonomy" id="598659"/>
    <lineage>
        <taxon>Bacteria</taxon>
        <taxon>Pseudomonadati</taxon>
        <taxon>Campylobacterota</taxon>
        <taxon>Epsilonproteobacteria</taxon>
        <taxon>Nautiliales</taxon>
        <taxon>Nautiliaceae</taxon>
        <taxon>Nautilia</taxon>
    </lineage>
</organism>
<accession>B9L5S9</accession>
<keyword id="KW-0963">Cytoplasm</keyword>
<keyword id="KW-0648">Protein biosynthesis</keyword>
<keyword id="KW-0663">Pyridoxal phosphate</keyword>
<keyword id="KW-0711">Selenium</keyword>
<keyword id="KW-0808">Transferase</keyword>
<dbReference type="EC" id="2.9.1.1" evidence="1"/>
<dbReference type="EMBL" id="CP001279">
    <property type="protein sequence ID" value="ACM93316.1"/>
    <property type="molecule type" value="Genomic_DNA"/>
</dbReference>
<dbReference type="RefSeq" id="WP_015902368.1">
    <property type="nucleotide sequence ID" value="NC_012115.1"/>
</dbReference>
<dbReference type="SMR" id="B9L5S9"/>
<dbReference type="STRING" id="598659.NAMH_1324"/>
<dbReference type="KEGG" id="nam:NAMH_1324"/>
<dbReference type="eggNOG" id="COG1921">
    <property type="taxonomic scope" value="Bacteria"/>
</dbReference>
<dbReference type="HOGENOM" id="CLU_038142_1_0_7"/>
<dbReference type="OrthoDB" id="9787096at2"/>
<dbReference type="UniPathway" id="UPA00906">
    <property type="reaction ID" value="UER00896"/>
</dbReference>
<dbReference type="Proteomes" id="UP000000448">
    <property type="component" value="Chromosome"/>
</dbReference>
<dbReference type="GO" id="GO:0005737">
    <property type="term" value="C:cytoplasm"/>
    <property type="evidence" value="ECO:0007669"/>
    <property type="project" value="UniProtKB-SubCell"/>
</dbReference>
<dbReference type="GO" id="GO:0004125">
    <property type="term" value="F:L-seryl-tRNA(Sec) selenium transferase activity"/>
    <property type="evidence" value="ECO:0007669"/>
    <property type="project" value="UniProtKB-UniRule"/>
</dbReference>
<dbReference type="GO" id="GO:0001717">
    <property type="term" value="P:conversion of seryl-tRNAsec to selenocys-tRNAsec"/>
    <property type="evidence" value="ECO:0007669"/>
    <property type="project" value="UniProtKB-UniRule"/>
</dbReference>
<dbReference type="GO" id="GO:0001514">
    <property type="term" value="P:selenocysteine incorporation"/>
    <property type="evidence" value="ECO:0007669"/>
    <property type="project" value="UniProtKB-UniRule"/>
</dbReference>
<dbReference type="Gene3D" id="3.90.1150.180">
    <property type="match status" value="1"/>
</dbReference>
<dbReference type="Gene3D" id="3.40.640.10">
    <property type="entry name" value="Type I PLP-dependent aspartate aminotransferase-like (Major domain)"/>
    <property type="match status" value="1"/>
</dbReference>
<dbReference type="HAMAP" id="MF_00423">
    <property type="entry name" value="SelA"/>
    <property type="match status" value="1"/>
</dbReference>
<dbReference type="InterPro" id="IPR015424">
    <property type="entry name" value="PyrdxlP-dep_Trfase"/>
</dbReference>
<dbReference type="InterPro" id="IPR015421">
    <property type="entry name" value="PyrdxlP-dep_Trfase_major"/>
</dbReference>
<dbReference type="InterPro" id="IPR018319">
    <property type="entry name" value="SelA-like"/>
</dbReference>
<dbReference type="InterPro" id="IPR004534">
    <property type="entry name" value="SelA_trans"/>
</dbReference>
<dbReference type="NCBIfam" id="TIGR00474">
    <property type="entry name" value="selA"/>
    <property type="match status" value="1"/>
</dbReference>
<dbReference type="PANTHER" id="PTHR32328">
    <property type="entry name" value="L-SERYL-TRNA(SEC) SELENIUM TRANSFERASE"/>
    <property type="match status" value="1"/>
</dbReference>
<dbReference type="PANTHER" id="PTHR32328:SF0">
    <property type="entry name" value="L-SERYL-TRNA(SEC) SELENIUM TRANSFERASE"/>
    <property type="match status" value="1"/>
</dbReference>
<dbReference type="Pfam" id="PF03841">
    <property type="entry name" value="SelA"/>
    <property type="match status" value="1"/>
</dbReference>
<dbReference type="SUPFAM" id="SSF53383">
    <property type="entry name" value="PLP-dependent transferases"/>
    <property type="match status" value="1"/>
</dbReference>
<sequence length="448" mass="50340">MNLFRQIPKVDKIEKALTHIPKKVLTPIIQKTLNEIREGIKNGKITQINEEDIVKTIEKRSEEILSPSIVNVINATGITVHTNLGRSLIDPEIFDYAKKRSTHYCNLEYDLEKGKRGDRYHHSAKILSHLFGSESALIVNNNAAAVFLILNTFAKDKEAIVSRGELVEIGGSFRVPEVMKASGAKLVEVGTTNKTKIQDYEDAITEDTAMLMKVHKSNYSIEGFSAEASLEEIIELAHKKNVLDYYDLGSAYIPKLPYSLTNYEPPISEIMKLNPSLVSFSGDKLFGSVQAGIILGKKDLIDKLKKNQILRMFRVDKITLSLIEATALAYIKEEYDKIPTLKSIFQTTEALKEKAKKLLSLTPGLKAEIKESHTYVGGGTMPNRKIPTVVVEIKGNAKKWEEDMRKHLVIGRIENEKFVLDMRSVQEDEIEKLAQIINSIITCEVKDA</sequence>
<reference key="1">
    <citation type="journal article" date="2009" name="PLoS Genet.">
        <title>Adaptations to submarine hydrothermal environments exemplified by the genome of Nautilia profundicola.</title>
        <authorList>
            <person name="Campbell B.J."/>
            <person name="Smith J.L."/>
            <person name="Hanson T.E."/>
            <person name="Klotz M.G."/>
            <person name="Stein L.Y."/>
            <person name="Lee C.K."/>
            <person name="Wu D."/>
            <person name="Robinson J.M."/>
            <person name="Khouri H.M."/>
            <person name="Eisen J.A."/>
            <person name="Cary S.C."/>
        </authorList>
    </citation>
    <scope>NUCLEOTIDE SEQUENCE [LARGE SCALE GENOMIC DNA]</scope>
    <source>
        <strain>ATCC BAA-1463 / DSM 18972 / AmH</strain>
    </source>
</reference>
<proteinExistence type="inferred from homology"/>
<comment type="function">
    <text evidence="1">Converts seryl-tRNA(Sec) to selenocysteinyl-tRNA(Sec) required for selenoprotein biosynthesis.</text>
</comment>
<comment type="catalytic activity">
    <reaction evidence="1">
        <text>L-seryl-tRNA(Sec) + selenophosphate + H(+) = L-selenocysteinyl-tRNA(Sec) + phosphate</text>
        <dbReference type="Rhea" id="RHEA:22728"/>
        <dbReference type="Rhea" id="RHEA-COMP:9742"/>
        <dbReference type="Rhea" id="RHEA-COMP:9743"/>
        <dbReference type="ChEBI" id="CHEBI:15378"/>
        <dbReference type="ChEBI" id="CHEBI:16144"/>
        <dbReference type="ChEBI" id="CHEBI:43474"/>
        <dbReference type="ChEBI" id="CHEBI:78533"/>
        <dbReference type="ChEBI" id="CHEBI:78573"/>
        <dbReference type="EC" id="2.9.1.1"/>
    </reaction>
</comment>
<comment type="cofactor">
    <cofactor evidence="1">
        <name>pyridoxal 5'-phosphate</name>
        <dbReference type="ChEBI" id="CHEBI:597326"/>
    </cofactor>
</comment>
<comment type="pathway">
    <text evidence="1">Aminoacyl-tRNA biosynthesis; selenocysteinyl-tRNA(Sec) biosynthesis; selenocysteinyl-tRNA(Sec) from L-seryl-tRNA(Sec) (bacterial route): step 1/1.</text>
</comment>
<comment type="subcellular location">
    <subcellularLocation>
        <location evidence="1">Cytoplasm</location>
    </subcellularLocation>
</comment>
<comment type="similarity">
    <text evidence="1">Belongs to the SelA family.</text>
</comment>
<protein>
    <recommendedName>
        <fullName evidence="1">L-seryl-tRNA(Sec) selenium transferase</fullName>
        <ecNumber evidence="1">2.9.1.1</ecNumber>
    </recommendedName>
    <alternativeName>
        <fullName evidence="1">Selenocysteine synthase</fullName>
        <shortName evidence="1">Sec synthase</shortName>
    </alternativeName>
    <alternativeName>
        <fullName evidence="1">Selenocysteinyl-tRNA(Sec) synthase</fullName>
    </alternativeName>
</protein>
<gene>
    <name evidence="1" type="primary">selA</name>
    <name type="ordered locus">NAMH_1324</name>
</gene>
<feature type="chain" id="PRO_1000134927" description="L-seryl-tRNA(Sec) selenium transferase">
    <location>
        <begin position="1"/>
        <end position="448"/>
    </location>
</feature>
<feature type="modified residue" description="N6-(pyridoxal phosphate)lysine" evidence="1">
    <location>
        <position position="284"/>
    </location>
</feature>
<evidence type="ECO:0000255" key="1">
    <source>
        <dbReference type="HAMAP-Rule" id="MF_00423"/>
    </source>
</evidence>